<feature type="chain" id="PRO_1000139492" description="CTP synthase">
    <location>
        <begin position="1"/>
        <end position="583"/>
    </location>
</feature>
<feature type="domain" description="Glutamine amidotransferase type-1" evidence="1">
    <location>
        <begin position="303"/>
        <end position="551"/>
    </location>
</feature>
<feature type="region of interest" description="Amidoligase domain" evidence="1">
    <location>
        <begin position="1"/>
        <end position="278"/>
    </location>
</feature>
<feature type="region of interest" description="Disordered" evidence="2">
    <location>
        <begin position="560"/>
        <end position="583"/>
    </location>
</feature>
<feature type="active site" description="Nucleophile; for glutamine hydrolysis" evidence="1">
    <location>
        <position position="393"/>
    </location>
</feature>
<feature type="active site" evidence="1">
    <location>
        <position position="524"/>
    </location>
</feature>
<feature type="active site" evidence="1">
    <location>
        <position position="526"/>
    </location>
</feature>
<feature type="binding site" evidence="1">
    <location>
        <position position="20"/>
    </location>
    <ligand>
        <name>CTP</name>
        <dbReference type="ChEBI" id="CHEBI:37563"/>
        <note>allosteric inhibitor</note>
    </ligand>
</feature>
<feature type="binding site" evidence="1">
    <location>
        <position position="20"/>
    </location>
    <ligand>
        <name>UTP</name>
        <dbReference type="ChEBI" id="CHEBI:46398"/>
    </ligand>
</feature>
<feature type="binding site" evidence="1">
    <location>
        <begin position="21"/>
        <end position="26"/>
    </location>
    <ligand>
        <name>ATP</name>
        <dbReference type="ChEBI" id="CHEBI:30616"/>
    </ligand>
</feature>
<feature type="binding site" evidence="1">
    <location>
        <position position="78"/>
    </location>
    <ligand>
        <name>ATP</name>
        <dbReference type="ChEBI" id="CHEBI:30616"/>
    </ligand>
</feature>
<feature type="binding site" evidence="1">
    <location>
        <position position="78"/>
    </location>
    <ligand>
        <name>Mg(2+)</name>
        <dbReference type="ChEBI" id="CHEBI:18420"/>
    </ligand>
</feature>
<feature type="binding site" evidence="1">
    <location>
        <position position="152"/>
    </location>
    <ligand>
        <name>Mg(2+)</name>
        <dbReference type="ChEBI" id="CHEBI:18420"/>
    </ligand>
</feature>
<feature type="binding site" evidence="1">
    <location>
        <begin position="159"/>
        <end position="161"/>
    </location>
    <ligand>
        <name>CTP</name>
        <dbReference type="ChEBI" id="CHEBI:37563"/>
        <note>allosteric inhibitor</note>
    </ligand>
</feature>
<feature type="binding site" evidence="1">
    <location>
        <begin position="199"/>
        <end position="204"/>
    </location>
    <ligand>
        <name>CTP</name>
        <dbReference type="ChEBI" id="CHEBI:37563"/>
        <note>allosteric inhibitor</note>
    </ligand>
</feature>
<feature type="binding site" evidence="1">
    <location>
        <begin position="199"/>
        <end position="204"/>
    </location>
    <ligand>
        <name>UTP</name>
        <dbReference type="ChEBI" id="CHEBI:46398"/>
    </ligand>
</feature>
<feature type="binding site" evidence="1">
    <location>
        <position position="235"/>
    </location>
    <ligand>
        <name>CTP</name>
        <dbReference type="ChEBI" id="CHEBI:37563"/>
        <note>allosteric inhibitor</note>
    </ligand>
</feature>
<feature type="binding site" evidence="1">
    <location>
        <position position="235"/>
    </location>
    <ligand>
        <name>UTP</name>
        <dbReference type="ChEBI" id="CHEBI:46398"/>
    </ligand>
</feature>
<feature type="binding site" evidence="1">
    <location>
        <position position="366"/>
    </location>
    <ligand>
        <name>L-glutamine</name>
        <dbReference type="ChEBI" id="CHEBI:58359"/>
    </ligand>
</feature>
<feature type="binding site" evidence="1">
    <location>
        <begin position="394"/>
        <end position="397"/>
    </location>
    <ligand>
        <name>L-glutamine</name>
        <dbReference type="ChEBI" id="CHEBI:58359"/>
    </ligand>
</feature>
<feature type="binding site" evidence="1">
    <location>
        <position position="416"/>
    </location>
    <ligand>
        <name>L-glutamine</name>
        <dbReference type="ChEBI" id="CHEBI:58359"/>
    </ligand>
</feature>
<feature type="binding site" evidence="1">
    <location>
        <position position="477"/>
    </location>
    <ligand>
        <name>L-glutamine</name>
        <dbReference type="ChEBI" id="CHEBI:58359"/>
    </ligand>
</feature>
<name>PYRG_MYCA1</name>
<reference key="1">
    <citation type="submission" date="2006-10" db="EMBL/GenBank/DDBJ databases">
        <authorList>
            <person name="Fleischmann R.D."/>
            <person name="Dodson R.J."/>
            <person name="Haft D.H."/>
            <person name="Merkel J.S."/>
            <person name="Nelson W.C."/>
            <person name="Fraser C.M."/>
        </authorList>
    </citation>
    <scope>NUCLEOTIDE SEQUENCE [LARGE SCALE GENOMIC DNA]</scope>
    <source>
        <strain>104</strain>
    </source>
</reference>
<proteinExistence type="inferred from homology"/>
<comment type="function">
    <text evidence="1">Catalyzes the ATP-dependent amination of UTP to CTP with either L-glutamine or ammonia as the source of nitrogen. Regulates intracellular CTP levels through interactions with the four ribonucleotide triphosphates.</text>
</comment>
<comment type="catalytic activity">
    <reaction evidence="1">
        <text>UTP + L-glutamine + ATP + H2O = CTP + L-glutamate + ADP + phosphate + 2 H(+)</text>
        <dbReference type="Rhea" id="RHEA:26426"/>
        <dbReference type="ChEBI" id="CHEBI:15377"/>
        <dbReference type="ChEBI" id="CHEBI:15378"/>
        <dbReference type="ChEBI" id="CHEBI:29985"/>
        <dbReference type="ChEBI" id="CHEBI:30616"/>
        <dbReference type="ChEBI" id="CHEBI:37563"/>
        <dbReference type="ChEBI" id="CHEBI:43474"/>
        <dbReference type="ChEBI" id="CHEBI:46398"/>
        <dbReference type="ChEBI" id="CHEBI:58359"/>
        <dbReference type="ChEBI" id="CHEBI:456216"/>
        <dbReference type="EC" id="6.3.4.2"/>
    </reaction>
</comment>
<comment type="catalytic activity">
    <reaction evidence="1">
        <text>L-glutamine + H2O = L-glutamate + NH4(+)</text>
        <dbReference type="Rhea" id="RHEA:15889"/>
        <dbReference type="ChEBI" id="CHEBI:15377"/>
        <dbReference type="ChEBI" id="CHEBI:28938"/>
        <dbReference type="ChEBI" id="CHEBI:29985"/>
        <dbReference type="ChEBI" id="CHEBI:58359"/>
    </reaction>
</comment>
<comment type="catalytic activity">
    <reaction evidence="1">
        <text>UTP + NH4(+) + ATP = CTP + ADP + phosphate + 2 H(+)</text>
        <dbReference type="Rhea" id="RHEA:16597"/>
        <dbReference type="ChEBI" id="CHEBI:15378"/>
        <dbReference type="ChEBI" id="CHEBI:28938"/>
        <dbReference type="ChEBI" id="CHEBI:30616"/>
        <dbReference type="ChEBI" id="CHEBI:37563"/>
        <dbReference type="ChEBI" id="CHEBI:43474"/>
        <dbReference type="ChEBI" id="CHEBI:46398"/>
        <dbReference type="ChEBI" id="CHEBI:456216"/>
    </reaction>
</comment>
<comment type="activity regulation">
    <text evidence="1">Allosterically activated by GTP, when glutamine is the substrate; GTP has no effect on the reaction when ammonia is the substrate. The allosteric effector GTP functions by stabilizing the protein conformation that binds the tetrahedral intermediate(s) formed during glutamine hydrolysis. Inhibited by the product CTP, via allosteric rather than competitive inhibition.</text>
</comment>
<comment type="pathway">
    <text evidence="1">Pyrimidine metabolism; CTP biosynthesis via de novo pathway; CTP from UDP: step 2/2.</text>
</comment>
<comment type="subunit">
    <text evidence="1">Homotetramer.</text>
</comment>
<comment type="miscellaneous">
    <text evidence="1">CTPSs have evolved a hybrid strategy for distinguishing between UTP and CTP. The overlapping regions of the product feedback inhibitory and substrate sites recognize a common feature in both compounds, the triphosphate moiety. To differentiate isosteric substrate and product pyrimidine rings, an additional pocket far from the expected kinase/ligase catalytic site, specifically recognizes the cytosine and ribose portions of the product inhibitor.</text>
</comment>
<comment type="similarity">
    <text evidence="1">Belongs to the CTP synthase family.</text>
</comment>
<dbReference type="EC" id="6.3.4.2" evidence="1"/>
<dbReference type="EMBL" id="CP000479">
    <property type="protein sequence ID" value="ABK64418.1"/>
    <property type="molecule type" value="Genomic_DNA"/>
</dbReference>
<dbReference type="RefSeq" id="WP_003876320.1">
    <property type="nucleotide sequence ID" value="NC_008595.1"/>
</dbReference>
<dbReference type="SMR" id="A0QH68"/>
<dbReference type="KEGG" id="mav:MAV_3072"/>
<dbReference type="HOGENOM" id="CLU_011675_5_0_11"/>
<dbReference type="UniPathway" id="UPA00159">
    <property type="reaction ID" value="UER00277"/>
</dbReference>
<dbReference type="Proteomes" id="UP000001574">
    <property type="component" value="Chromosome"/>
</dbReference>
<dbReference type="GO" id="GO:0005829">
    <property type="term" value="C:cytosol"/>
    <property type="evidence" value="ECO:0007669"/>
    <property type="project" value="TreeGrafter"/>
</dbReference>
<dbReference type="GO" id="GO:0005524">
    <property type="term" value="F:ATP binding"/>
    <property type="evidence" value="ECO:0007669"/>
    <property type="project" value="UniProtKB-KW"/>
</dbReference>
<dbReference type="GO" id="GO:0003883">
    <property type="term" value="F:CTP synthase activity"/>
    <property type="evidence" value="ECO:0007669"/>
    <property type="project" value="UniProtKB-UniRule"/>
</dbReference>
<dbReference type="GO" id="GO:0004359">
    <property type="term" value="F:glutaminase activity"/>
    <property type="evidence" value="ECO:0007669"/>
    <property type="project" value="RHEA"/>
</dbReference>
<dbReference type="GO" id="GO:0042802">
    <property type="term" value="F:identical protein binding"/>
    <property type="evidence" value="ECO:0007669"/>
    <property type="project" value="TreeGrafter"/>
</dbReference>
<dbReference type="GO" id="GO:0046872">
    <property type="term" value="F:metal ion binding"/>
    <property type="evidence" value="ECO:0007669"/>
    <property type="project" value="UniProtKB-KW"/>
</dbReference>
<dbReference type="GO" id="GO:0044210">
    <property type="term" value="P:'de novo' CTP biosynthetic process"/>
    <property type="evidence" value="ECO:0007669"/>
    <property type="project" value="UniProtKB-UniRule"/>
</dbReference>
<dbReference type="GO" id="GO:0019856">
    <property type="term" value="P:pyrimidine nucleobase biosynthetic process"/>
    <property type="evidence" value="ECO:0007669"/>
    <property type="project" value="TreeGrafter"/>
</dbReference>
<dbReference type="CDD" id="cd03113">
    <property type="entry name" value="CTPS_N"/>
    <property type="match status" value="1"/>
</dbReference>
<dbReference type="CDD" id="cd01746">
    <property type="entry name" value="GATase1_CTP_Synthase"/>
    <property type="match status" value="1"/>
</dbReference>
<dbReference type="FunFam" id="3.40.50.300:FF:000009">
    <property type="entry name" value="CTP synthase"/>
    <property type="match status" value="1"/>
</dbReference>
<dbReference type="FunFam" id="3.40.50.880:FF:000002">
    <property type="entry name" value="CTP synthase"/>
    <property type="match status" value="1"/>
</dbReference>
<dbReference type="Gene3D" id="3.40.50.880">
    <property type="match status" value="1"/>
</dbReference>
<dbReference type="Gene3D" id="3.40.50.300">
    <property type="entry name" value="P-loop containing nucleotide triphosphate hydrolases"/>
    <property type="match status" value="1"/>
</dbReference>
<dbReference type="HAMAP" id="MF_01227">
    <property type="entry name" value="PyrG"/>
    <property type="match status" value="1"/>
</dbReference>
<dbReference type="InterPro" id="IPR029062">
    <property type="entry name" value="Class_I_gatase-like"/>
</dbReference>
<dbReference type="InterPro" id="IPR004468">
    <property type="entry name" value="CTP_synthase"/>
</dbReference>
<dbReference type="InterPro" id="IPR017456">
    <property type="entry name" value="CTP_synthase_N"/>
</dbReference>
<dbReference type="InterPro" id="IPR017926">
    <property type="entry name" value="GATASE"/>
</dbReference>
<dbReference type="InterPro" id="IPR033828">
    <property type="entry name" value="GATase1_CTP_Synthase"/>
</dbReference>
<dbReference type="InterPro" id="IPR027417">
    <property type="entry name" value="P-loop_NTPase"/>
</dbReference>
<dbReference type="NCBIfam" id="NF003792">
    <property type="entry name" value="PRK05380.1"/>
    <property type="match status" value="1"/>
</dbReference>
<dbReference type="NCBIfam" id="TIGR00337">
    <property type="entry name" value="PyrG"/>
    <property type="match status" value="1"/>
</dbReference>
<dbReference type="PANTHER" id="PTHR11550">
    <property type="entry name" value="CTP SYNTHASE"/>
    <property type="match status" value="1"/>
</dbReference>
<dbReference type="PANTHER" id="PTHR11550:SF0">
    <property type="entry name" value="CTP SYNTHASE-RELATED"/>
    <property type="match status" value="1"/>
</dbReference>
<dbReference type="Pfam" id="PF06418">
    <property type="entry name" value="CTP_synth_N"/>
    <property type="match status" value="1"/>
</dbReference>
<dbReference type="Pfam" id="PF00117">
    <property type="entry name" value="GATase"/>
    <property type="match status" value="1"/>
</dbReference>
<dbReference type="SUPFAM" id="SSF52317">
    <property type="entry name" value="Class I glutamine amidotransferase-like"/>
    <property type="match status" value="1"/>
</dbReference>
<dbReference type="SUPFAM" id="SSF52540">
    <property type="entry name" value="P-loop containing nucleoside triphosphate hydrolases"/>
    <property type="match status" value="1"/>
</dbReference>
<dbReference type="PROSITE" id="PS51273">
    <property type="entry name" value="GATASE_TYPE_1"/>
    <property type="match status" value="1"/>
</dbReference>
<sequence>MRKHPQTATKHLFVSGGVASSLGKGLTASSLGQLLTARGLYVTMQKLDPYLNVDPGTMNPFQHGEVFVTEDGAETDLDVGHYERFLDRDLSGSANVTTGQVYSTVIAKERRGEYLGDTVQVIPHITDEIKGRILAMAQPDAQGNRPDVVITEIGGTVGDIESQPFLEAARQVRHDLGRENVFFLHVSLVPYLAPSGELKTKPTQHSVAALRSIGITPDALILRCDRDVPEALKNKIALMCDVDIDGVISTPDAPSIYDIPKVLHREELDAYVVRRLNLPFRDVDWTEWDDLLRRVHEPHETVRIALVGKYVELSDAYLSVTEALRAGGFFHHAKVEMVWVASDDCESASGAAAALGEVHGVLIPGGFGIRGIEGKIGAIHYARTRGLPVLGLCLGLQCIVIEAARAAGLAGANSAEFDPDTPDPVISTMADQVDIVAGAADLGGTMRLGAYPAVLEEDSIVARAYGTTQVSERHRHRYEVNNAYRDKIAESGLRFSGTSPDGHLVEFVEYPPDVHPFIVGTQAHPELKSRPTRPHPLFVAFVGAAMDYKAGELLPVEIPEQSSNGIQHRDSAARPIPEPAARG</sequence>
<accession>A0QH68</accession>
<organism>
    <name type="scientific">Mycobacterium avium (strain 104)</name>
    <dbReference type="NCBI Taxonomy" id="243243"/>
    <lineage>
        <taxon>Bacteria</taxon>
        <taxon>Bacillati</taxon>
        <taxon>Actinomycetota</taxon>
        <taxon>Actinomycetes</taxon>
        <taxon>Mycobacteriales</taxon>
        <taxon>Mycobacteriaceae</taxon>
        <taxon>Mycobacterium</taxon>
        <taxon>Mycobacterium avium complex (MAC)</taxon>
    </lineage>
</organism>
<gene>
    <name evidence="1" type="primary">pyrG</name>
    <name type="ordered locus">MAV_3072</name>
</gene>
<keyword id="KW-0067">ATP-binding</keyword>
<keyword id="KW-0315">Glutamine amidotransferase</keyword>
<keyword id="KW-0436">Ligase</keyword>
<keyword id="KW-0460">Magnesium</keyword>
<keyword id="KW-0479">Metal-binding</keyword>
<keyword id="KW-0547">Nucleotide-binding</keyword>
<keyword id="KW-0665">Pyrimidine biosynthesis</keyword>
<evidence type="ECO:0000255" key="1">
    <source>
        <dbReference type="HAMAP-Rule" id="MF_01227"/>
    </source>
</evidence>
<evidence type="ECO:0000256" key="2">
    <source>
        <dbReference type="SAM" id="MobiDB-lite"/>
    </source>
</evidence>
<protein>
    <recommendedName>
        <fullName evidence="1">CTP synthase</fullName>
        <ecNumber evidence="1">6.3.4.2</ecNumber>
    </recommendedName>
    <alternativeName>
        <fullName evidence="1">Cytidine 5'-triphosphate synthase</fullName>
    </alternativeName>
    <alternativeName>
        <fullName evidence="1">Cytidine triphosphate synthetase</fullName>
        <shortName evidence="1">CTP synthetase</shortName>
        <shortName evidence="1">CTPS</shortName>
    </alternativeName>
    <alternativeName>
        <fullName evidence="1">UTP--ammonia ligase</fullName>
    </alternativeName>
</protein>